<protein>
    <recommendedName>
        <fullName evidence="1">Putative membrane protein insertion efficiency factor</fullName>
    </recommendedName>
</protein>
<accession>Q329B3</accession>
<evidence type="ECO:0000255" key="1">
    <source>
        <dbReference type="HAMAP-Rule" id="MF_00386"/>
    </source>
</evidence>
<dbReference type="EMBL" id="CP000034">
    <property type="protein sequence ID" value="ABB64092.1"/>
    <property type="molecule type" value="Genomic_DNA"/>
</dbReference>
<dbReference type="RefSeq" id="WP_001307474.1">
    <property type="nucleotide sequence ID" value="NC_007606.1"/>
</dbReference>
<dbReference type="RefSeq" id="YP_405583.1">
    <property type="nucleotide sequence ID" value="NC_007606.1"/>
</dbReference>
<dbReference type="STRING" id="300267.SDY_4187"/>
<dbReference type="EnsemblBacteria" id="ABB64092">
    <property type="protein sequence ID" value="ABB64092"/>
    <property type="gene ID" value="SDY_4187"/>
</dbReference>
<dbReference type="GeneID" id="97443257"/>
<dbReference type="KEGG" id="sdy:SDY_4187"/>
<dbReference type="HOGENOM" id="CLU_144811_5_2_6"/>
<dbReference type="Proteomes" id="UP000002716">
    <property type="component" value="Chromosome"/>
</dbReference>
<dbReference type="GO" id="GO:0005886">
    <property type="term" value="C:plasma membrane"/>
    <property type="evidence" value="ECO:0007669"/>
    <property type="project" value="UniProtKB-SubCell"/>
</dbReference>
<dbReference type="HAMAP" id="MF_00386">
    <property type="entry name" value="UPF0161_YidD"/>
    <property type="match status" value="1"/>
</dbReference>
<dbReference type="InterPro" id="IPR002696">
    <property type="entry name" value="Membr_insert_effic_factor_YidD"/>
</dbReference>
<dbReference type="NCBIfam" id="TIGR00278">
    <property type="entry name" value="membrane protein insertion efficiency factor YidD"/>
    <property type="match status" value="1"/>
</dbReference>
<dbReference type="PANTHER" id="PTHR33383">
    <property type="entry name" value="MEMBRANE PROTEIN INSERTION EFFICIENCY FACTOR-RELATED"/>
    <property type="match status" value="1"/>
</dbReference>
<dbReference type="PANTHER" id="PTHR33383:SF1">
    <property type="entry name" value="MEMBRANE PROTEIN INSERTION EFFICIENCY FACTOR-RELATED"/>
    <property type="match status" value="1"/>
</dbReference>
<dbReference type="Pfam" id="PF01809">
    <property type="entry name" value="YidD"/>
    <property type="match status" value="1"/>
</dbReference>
<dbReference type="SMART" id="SM01234">
    <property type="entry name" value="Haemolytic"/>
    <property type="match status" value="1"/>
</dbReference>
<name>YIDD_SHIDS</name>
<reference key="1">
    <citation type="journal article" date="2005" name="Nucleic Acids Res.">
        <title>Genome dynamics and diversity of Shigella species, the etiologic agents of bacillary dysentery.</title>
        <authorList>
            <person name="Yang F."/>
            <person name="Yang J."/>
            <person name="Zhang X."/>
            <person name="Chen L."/>
            <person name="Jiang Y."/>
            <person name="Yan Y."/>
            <person name="Tang X."/>
            <person name="Wang J."/>
            <person name="Xiong Z."/>
            <person name="Dong J."/>
            <person name="Xue Y."/>
            <person name="Zhu Y."/>
            <person name="Xu X."/>
            <person name="Sun L."/>
            <person name="Chen S."/>
            <person name="Nie H."/>
            <person name="Peng J."/>
            <person name="Xu J."/>
            <person name="Wang Y."/>
            <person name="Yuan Z."/>
            <person name="Wen Y."/>
            <person name="Yao Z."/>
            <person name="Shen Y."/>
            <person name="Qiang B."/>
            <person name="Hou Y."/>
            <person name="Yu J."/>
            <person name="Jin Q."/>
        </authorList>
    </citation>
    <scope>NUCLEOTIDE SEQUENCE [LARGE SCALE GENOMIC DNA]</scope>
    <source>
        <strain>Sd197</strain>
    </source>
</reference>
<gene>
    <name evidence="1" type="primary">yidD</name>
    <name type="ordered locus">SDY_4187</name>
</gene>
<organism>
    <name type="scientific">Shigella dysenteriae serotype 1 (strain Sd197)</name>
    <dbReference type="NCBI Taxonomy" id="300267"/>
    <lineage>
        <taxon>Bacteria</taxon>
        <taxon>Pseudomonadati</taxon>
        <taxon>Pseudomonadota</taxon>
        <taxon>Gammaproteobacteria</taxon>
        <taxon>Enterobacterales</taxon>
        <taxon>Enterobacteriaceae</taxon>
        <taxon>Shigella</taxon>
    </lineage>
</organism>
<feature type="chain" id="PRO_0000253167" description="Putative membrane protein insertion efficiency factor">
    <location>
        <begin position="1"/>
        <end position="85"/>
    </location>
</feature>
<comment type="function">
    <text evidence="1">Could be involved in insertion of integral membrane proteins into the membrane.</text>
</comment>
<comment type="subcellular location">
    <subcellularLocation>
        <location evidence="1">Cell inner membrane</location>
        <topology evidence="1">Peripheral membrane protein</topology>
        <orientation evidence="1">Cytoplasmic side</orientation>
    </subcellularLocation>
</comment>
<comment type="similarity">
    <text evidence="1">Belongs to the UPF0161 family.</text>
</comment>
<keyword id="KW-0997">Cell inner membrane</keyword>
<keyword id="KW-1003">Cell membrane</keyword>
<keyword id="KW-0472">Membrane</keyword>
<keyword id="KW-1185">Reference proteome</keyword>
<sequence length="85" mass="9381">MAPPLSPGSRVLIALIRVYQRLISPLLGPHCRFTPTCSSYGIEALRRFGVIKGSWLTVKRVLKCHPLHPGGDDPVPPGPFDTREH</sequence>
<proteinExistence type="inferred from homology"/>